<organism>
    <name type="scientific">Aquifex aeolicus (strain VF5)</name>
    <dbReference type="NCBI Taxonomy" id="224324"/>
    <lineage>
        <taxon>Bacteria</taxon>
        <taxon>Pseudomonadati</taxon>
        <taxon>Aquificota</taxon>
        <taxon>Aquificia</taxon>
        <taxon>Aquificales</taxon>
        <taxon>Aquificaceae</taxon>
        <taxon>Aquifex</taxon>
    </lineage>
</organism>
<keyword id="KW-0963">Cytoplasm</keyword>
<keyword id="KW-0489">Methyltransferase</keyword>
<keyword id="KW-1185">Reference proteome</keyword>
<keyword id="KW-0698">rRNA processing</keyword>
<keyword id="KW-0949">S-adenosyl-L-methionine</keyword>
<keyword id="KW-0808">Transferase</keyword>
<sequence length="196" mass="23125">MIRELFEKEGFTLDEEQERKFSIYLQELLRWNKVHNLTSIKKPEEIVRRHFIDSVSVVRCFERIGLDLRGKHFADVGSGAGFPGVPLKIYLKDIKLTLIESVSKKCSFLEYLKIKLNEDYRVLCTRAEKVEEKFDVVLARALGEFEEVKEILEKLSIGYVFVYKGSKLKEEWLKDYKLCELSLSFMPKSYILWKKV</sequence>
<evidence type="ECO:0000255" key="1">
    <source>
        <dbReference type="HAMAP-Rule" id="MF_00074"/>
    </source>
</evidence>
<comment type="function">
    <text evidence="1">Specifically methylates the N7 position of a guanine in 16S rRNA.</text>
</comment>
<comment type="subcellular location">
    <subcellularLocation>
        <location evidence="1">Cytoplasm</location>
    </subcellularLocation>
</comment>
<comment type="similarity">
    <text evidence="1">Belongs to the methyltransferase superfamily. RNA methyltransferase RsmG family.</text>
</comment>
<proteinExistence type="inferred from homology"/>
<feature type="chain" id="PRO_0000184207" description="Ribosomal RNA small subunit methyltransferase G">
    <location>
        <begin position="1"/>
        <end position="196"/>
    </location>
</feature>
<feature type="binding site" evidence="1">
    <location>
        <position position="77"/>
    </location>
    <ligand>
        <name>S-adenosyl-L-methionine</name>
        <dbReference type="ChEBI" id="CHEBI:59789"/>
    </ligand>
</feature>
<feature type="binding site" evidence="1">
    <location>
        <position position="82"/>
    </location>
    <ligand>
        <name>S-adenosyl-L-methionine</name>
        <dbReference type="ChEBI" id="CHEBI:59789"/>
    </ligand>
</feature>
<feature type="binding site" evidence="1">
    <location>
        <begin position="127"/>
        <end position="128"/>
    </location>
    <ligand>
        <name>S-adenosyl-L-methionine</name>
        <dbReference type="ChEBI" id="CHEBI:59789"/>
    </ligand>
</feature>
<feature type="binding site" evidence="1">
    <location>
        <position position="140"/>
    </location>
    <ligand>
        <name>S-adenosyl-L-methionine</name>
        <dbReference type="ChEBI" id="CHEBI:59789"/>
    </ligand>
</feature>
<name>RSMG_AQUAE</name>
<accession>O67522</accession>
<protein>
    <recommendedName>
        <fullName evidence="1">Ribosomal RNA small subunit methyltransferase G</fullName>
        <ecNumber evidence="1">2.1.1.-</ecNumber>
    </recommendedName>
    <alternativeName>
        <fullName evidence="1">16S rRNA 7-methylguanosine methyltransferase</fullName>
        <shortName evidence="1">16S rRNA m7G methyltransferase</shortName>
    </alternativeName>
</protein>
<reference key="1">
    <citation type="journal article" date="1998" name="Nature">
        <title>The complete genome of the hyperthermophilic bacterium Aquifex aeolicus.</title>
        <authorList>
            <person name="Deckert G."/>
            <person name="Warren P.V."/>
            <person name="Gaasterland T."/>
            <person name="Young W.G."/>
            <person name="Lenox A.L."/>
            <person name="Graham D.E."/>
            <person name="Overbeek R."/>
            <person name="Snead M.A."/>
            <person name="Keller M."/>
            <person name="Aujay M."/>
            <person name="Huber R."/>
            <person name="Feldman R.A."/>
            <person name="Short J.M."/>
            <person name="Olsen G.J."/>
            <person name="Swanson R.V."/>
        </authorList>
    </citation>
    <scope>NUCLEOTIDE SEQUENCE [LARGE SCALE GENOMIC DNA]</scope>
    <source>
        <strain>VF5</strain>
    </source>
</reference>
<dbReference type="EC" id="2.1.1.-" evidence="1"/>
<dbReference type="EMBL" id="AE000657">
    <property type="protein sequence ID" value="AAC07476.1"/>
    <property type="molecule type" value="Genomic_DNA"/>
</dbReference>
<dbReference type="PIR" id="H70436">
    <property type="entry name" value="H70436"/>
</dbReference>
<dbReference type="RefSeq" id="NP_214087.1">
    <property type="nucleotide sequence ID" value="NC_000918.1"/>
</dbReference>
<dbReference type="RefSeq" id="WP_010881025.1">
    <property type="nucleotide sequence ID" value="NC_000918.1"/>
</dbReference>
<dbReference type="SMR" id="O67522"/>
<dbReference type="FunCoup" id="O67522">
    <property type="interactions" value="418"/>
</dbReference>
<dbReference type="STRING" id="224324.aq_1582"/>
<dbReference type="EnsemblBacteria" id="AAC07476">
    <property type="protein sequence ID" value="AAC07476"/>
    <property type="gene ID" value="aq_1582"/>
</dbReference>
<dbReference type="KEGG" id="aae:aq_1582"/>
<dbReference type="PATRIC" id="fig|224324.8.peg.1221"/>
<dbReference type="eggNOG" id="COG0357">
    <property type="taxonomic scope" value="Bacteria"/>
</dbReference>
<dbReference type="HOGENOM" id="CLU_065341_2_1_0"/>
<dbReference type="InParanoid" id="O67522"/>
<dbReference type="OrthoDB" id="9808773at2"/>
<dbReference type="Proteomes" id="UP000000798">
    <property type="component" value="Chromosome"/>
</dbReference>
<dbReference type="GO" id="GO:0005829">
    <property type="term" value="C:cytosol"/>
    <property type="evidence" value="ECO:0000318"/>
    <property type="project" value="GO_Central"/>
</dbReference>
<dbReference type="GO" id="GO:0070043">
    <property type="term" value="F:rRNA (guanine-N7-)-methyltransferase activity"/>
    <property type="evidence" value="ECO:0000318"/>
    <property type="project" value="GO_Central"/>
</dbReference>
<dbReference type="Gene3D" id="3.40.50.150">
    <property type="entry name" value="Vaccinia Virus protein VP39"/>
    <property type="match status" value="1"/>
</dbReference>
<dbReference type="HAMAP" id="MF_00074">
    <property type="entry name" value="16SrRNA_methyltr_G"/>
    <property type="match status" value="1"/>
</dbReference>
<dbReference type="InterPro" id="IPR003682">
    <property type="entry name" value="rRNA_ssu_MeTfrase_G"/>
</dbReference>
<dbReference type="InterPro" id="IPR029063">
    <property type="entry name" value="SAM-dependent_MTases_sf"/>
</dbReference>
<dbReference type="NCBIfam" id="TIGR00138">
    <property type="entry name" value="rsmG_gidB"/>
    <property type="match status" value="1"/>
</dbReference>
<dbReference type="PANTHER" id="PTHR31760">
    <property type="entry name" value="S-ADENOSYL-L-METHIONINE-DEPENDENT METHYLTRANSFERASES SUPERFAMILY PROTEIN"/>
    <property type="match status" value="1"/>
</dbReference>
<dbReference type="PANTHER" id="PTHR31760:SF0">
    <property type="entry name" value="S-ADENOSYL-L-METHIONINE-DEPENDENT METHYLTRANSFERASES SUPERFAMILY PROTEIN"/>
    <property type="match status" value="1"/>
</dbReference>
<dbReference type="Pfam" id="PF02527">
    <property type="entry name" value="GidB"/>
    <property type="match status" value="1"/>
</dbReference>
<dbReference type="PIRSF" id="PIRSF003078">
    <property type="entry name" value="GidB"/>
    <property type="match status" value="1"/>
</dbReference>
<dbReference type="SUPFAM" id="SSF53335">
    <property type="entry name" value="S-adenosyl-L-methionine-dependent methyltransferases"/>
    <property type="match status" value="1"/>
</dbReference>
<gene>
    <name evidence="1" type="primary">rsmG</name>
    <name type="ordered locus">aq_1582</name>
</gene>